<name>S22A2_RAT</name>
<sequence>MSTVDDILEHIGEFHLFQKQTFFLLALLSGAFTPIYVGIVFLGFTPDHHCWSPGAAKLSQRCGWSQAEELNYTVPGLGPSDEASFLSQCMRYEVDWNQSTLDCVDPLSSLAADRNQLPLGPCEHGWVYNTPGSSIVTEFNLVCAHSWMLDLFQSVVNVGFFIGAMMIGYLADRFGRKFCLLVTILINAISGALMAISPNYAWMLVFRFLQGLVSKAGWLIGYILITEFVGLGYRRMVGICYQIAFTVGLLILAGVAYVIPNWRWLQFAVTLPNFCFLLYFWCIPESPRWLISQNKIVKAMKIIKHIAKKNGKSVPVSLQNLTPDEDAGKKLNPSFLDLVRTPQIRKHTLILMYNWFTSSVLYQGLIMHMGLAGDNIYLDFFYSALVEFPAAFIIILTIDRVGRRYPWAVSNMVAGAACLASVFIPDDLQWLKITIACLGRMGITMAYEMVCLVNAELYPTYIRNLGVLVCSSMCDIGGIITPFLVYRLTDIWMEFPLVVFAVVGLVAGALVLLLPETKGKALPETIEDAENMQRPRKKKEKRIYLQVKQADRPLS</sequence>
<evidence type="ECO:0000250" key="1">
    <source>
        <dbReference type="UniProtKB" id="O15244"/>
    </source>
</evidence>
<evidence type="ECO:0000250" key="2">
    <source>
        <dbReference type="UniProtKB" id="O70577"/>
    </source>
</evidence>
<evidence type="ECO:0000255" key="3"/>
<evidence type="ECO:0000269" key="4">
    <source>
    </source>
</evidence>
<evidence type="ECO:0000269" key="5">
    <source>
    </source>
</evidence>
<evidence type="ECO:0000269" key="6">
    <source>
    </source>
</evidence>
<evidence type="ECO:0000269" key="7">
    <source>
    </source>
</evidence>
<evidence type="ECO:0000269" key="8">
    <source>
    </source>
</evidence>
<evidence type="ECO:0000269" key="9">
    <source>
    </source>
</evidence>
<evidence type="ECO:0000269" key="10">
    <source>
    </source>
</evidence>
<evidence type="ECO:0000269" key="11">
    <source>
    </source>
</evidence>
<evidence type="ECO:0000269" key="12">
    <source>
    </source>
</evidence>
<evidence type="ECO:0000269" key="13">
    <source>
    </source>
</evidence>
<evidence type="ECO:0000269" key="14">
    <source>
    </source>
</evidence>
<evidence type="ECO:0000269" key="15">
    <source>
    </source>
</evidence>
<evidence type="ECO:0000269" key="16">
    <source>
    </source>
</evidence>
<evidence type="ECO:0000269" key="17">
    <source>
    </source>
</evidence>
<evidence type="ECO:0000269" key="18">
    <source>
    </source>
</evidence>
<evidence type="ECO:0000269" key="19">
    <source>
    </source>
</evidence>
<evidence type="ECO:0000303" key="20">
    <source>
    </source>
</evidence>
<evidence type="ECO:0000303" key="21">
    <source>
    </source>
</evidence>
<evidence type="ECO:0000303" key="22">
    <source>
    </source>
</evidence>
<evidence type="ECO:0000303" key="23">
    <source>
    </source>
</evidence>
<evidence type="ECO:0000305" key="24"/>
<evidence type="ECO:0000305" key="25">
    <source>
    </source>
</evidence>
<evidence type="ECO:0000312" key="26">
    <source>
        <dbReference type="RGD" id="61936"/>
    </source>
</evidence>
<dbReference type="EMBL" id="D83044">
    <property type="protein sequence ID" value="BAA11754.1"/>
    <property type="status" value="ALT_FRAME"/>
    <property type="molecule type" value="mRNA"/>
</dbReference>
<dbReference type="EMBL" id="X98334">
    <property type="protein sequence ID" value="CAA66979.1"/>
    <property type="status" value="ALT_FRAME"/>
    <property type="molecule type" value="mRNA"/>
</dbReference>
<dbReference type="EMBL" id="Y13154">
    <property type="protein sequence ID" value="CAB52215.1"/>
    <property type="molecule type" value="mRNA"/>
</dbReference>
<dbReference type="PIR" id="JC4884">
    <property type="entry name" value="JC4884"/>
</dbReference>
<dbReference type="RefSeq" id="NP_113772.1">
    <property type="nucleotide sequence ID" value="NM_031584.2"/>
</dbReference>
<dbReference type="SMR" id="Q9R0W2"/>
<dbReference type="FunCoup" id="Q9R0W2">
    <property type="interactions" value="31"/>
</dbReference>
<dbReference type="STRING" id="10116.ENSRNOP00000023116"/>
<dbReference type="BindingDB" id="Q9R0W2"/>
<dbReference type="ChEMBL" id="CHEMBL1770032"/>
<dbReference type="TCDB" id="2.A.1.19.19">
    <property type="family name" value="the major facilitator superfamily (mfs)"/>
</dbReference>
<dbReference type="GlyCosmos" id="Q9R0W2">
    <property type="glycosylation" value="1 site, No reported glycans"/>
</dbReference>
<dbReference type="GlyGen" id="Q9R0W2">
    <property type="glycosylation" value="1 site"/>
</dbReference>
<dbReference type="iPTMnet" id="Q9R0W2"/>
<dbReference type="PhosphoSitePlus" id="Q9R0W2"/>
<dbReference type="PaxDb" id="10116-ENSRNOP00000023116"/>
<dbReference type="GeneID" id="29503"/>
<dbReference type="KEGG" id="rno:29503"/>
<dbReference type="AGR" id="RGD:61936"/>
<dbReference type="CTD" id="6582"/>
<dbReference type="RGD" id="61936">
    <property type="gene designation" value="Slc22a2"/>
</dbReference>
<dbReference type="eggNOG" id="KOG0255">
    <property type="taxonomic scope" value="Eukaryota"/>
</dbReference>
<dbReference type="InParanoid" id="Q9R0W2"/>
<dbReference type="OrthoDB" id="5141738at2759"/>
<dbReference type="PhylomeDB" id="Q9R0W2"/>
<dbReference type="TreeFam" id="TF315847"/>
<dbReference type="Reactome" id="R-RNO-112311">
    <property type="pathway name" value="Neurotransmitter clearance"/>
</dbReference>
<dbReference type="Reactome" id="R-RNO-181430">
    <property type="pathway name" value="Norepinephrine Neurotransmitter Release Cycle"/>
</dbReference>
<dbReference type="Reactome" id="R-RNO-2161517">
    <property type="pathway name" value="Abacavir transmembrane transport"/>
</dbReference>
<dbReference type="Reactome" id="R-RNO-442660">
    <property type="pathway name" value="Na+/Cl- dependent neurotransmitter transporters"/>
</dbReference>
<dbReference type="Reactome" id="R-RNO-549127">
    <property type="pathway name" value="Organic cation transport"/>
</dbReference>
<dbReference type="SABIO-RK" id="Q9R0W2"/>
<dbReference type="PRO" id="PR:Q9R0W2"/>
<dbReference type="Proteomes" id="UP000002494">
    <property type="component" value="Unplaced"/>
</dbReference>
<dbReference type="GO" id="GO:0016324">
    <property type="term" value="C:apical plasma membrane"/>
    <property type="evidence" value="ECO:0000314"/>
    <property type="project" value="UniProtKB"/>
</dbReference>
<dbReference type="GO" id="GO:0009925">
    <property type="term" value="C:basal plasma membrane"/>
    <property type="evidence" value="ECO:0000266"/>
    <property type="project" value="RGD"/>
</dbReference>
<dbReference type="GO" id="GO:0016323">
    <property type="term" value="C:basolateral plasma membrane"/>
    <property type="evidence" value="ECO:0000314"/>
    <property type="project" value="UniProtKB"/>
</dbReference>
<dbReference type="GO" id="GO:0098981">
    <property type="term" value="C:cholinergic synapse"/>
    <property type="evidence" value="ECO:0000314"/>
    <property type="project" value="SynGO"/>
</dbReference>
<dbReference type="GO" id="GO:0005886">
    <property type="term" value="C:plasma membrane"/>
    <property type="evidence" value="ECO:0000314"/>
    <property type="project" value="MGI"/>
</dbReference>
<dbReference type="GO" id="GO:0042734">
    <property type="term" value="C:presynaptic membrane"/>
    <property type="evidence" value="ECO:0000314"/>
    <property type="project" value="SynGO"/>
</dbReference>
<dbReference type="GO" id="GO:0030672">
    <property type="term" value="C:synaptic vesicle membrane"/>
    <property type="evidence" value="ECO:0000314"/>
    <property type="project" value="SynGO"/>
</dbReference>
<dbReference type="GO" id="GO:0005277">
    <property type="term" value="F:acetylcholine transmembrane transporter activity"/>
    <property type="evidence" value="ECO:0000314"/>
    <property type="project" value="UniProtKB"/>
</dbReference>
<dbReference type="GO" id="GO:0005275">
    <property type="term" value="F:amine transmembrane transporter activity"/>
    <property type="evidence" value="ECO:0000266"/>
    <property type="project" value="RGD"/>
</dbReference>
<dbReference type="GO" id="GO:0015220">
    <property type="term" value="F:choline transmembrane transporter activity"/>
    <property type="evidence" value="ECO:0000314"/>
    <property type="project" value="RGD"/>
</dbReference>
<dbReference type="GO" id="GO:0015562">
    <property type="term" value="F:efflux transmembrane transporter activity"/>
    <property type="evidence" value="ECO:0000266"/>
    <property type="project" value="RGD"/>
</dbReference>
<dbReference type="GO" id="GO:0015179">
    <property type="term" value="F:L-amino acid transmembrane transporter activity"/>
    <property type="evidence" value="ECO:0000266"/>
    <property type="project" value="RGD"/>
</dbReference>
<dbReference type="GO" id="GO:0061459">
    <property type="term" value="F:L-arginine transmembrane transporter activity"/>
    <property type="evidence" value="ECO:0000266"/>
    <property type="project" value="RGD"/>
</dbReference>
<dbReference type="GO" id="GO:0008504">
    <property type="term" value="F:monoamine transmembrane transporter activity"/>
    <property type="evidence" value="ECO:0000314"/>
    <property type="project" value="UniProtKB"/>
</dbReference>
<dbReference type="GO" id="GO:0005326">
    <property type="term" value="F:neurotransmitter transmembrane transporter activity"/>
    <property type="evidence" value="ECO:0000314"/>
    <property type="project" value="UniProtKB"/>
</dbReference>
<dbReference type="GO" id="GO:0008514">
    <property type="term" value="F:organic anion transmembrane transporter activity"/>
    <property type="evidence" value="ECO:0000250"/>
    <property type="project" value="UniProtKB"/>
</dbReference>
<dbReference type="GO" id="GO:0015101">
    <property type="term" value="F:organic cation transmembrane transporter activity"/>
    <property type="evidence" value="ECO:0000314"/>
    <property type="project" value="UniProtKB"/>
</dbReference>
<dbReference type="GO" id="GO:0015132">
    <property type="term" value="F:prostaglandin transmembrane transporter activity"/>
    <property type="evidence" value="ECO:0000250"/>
    <property type="project" value="UniProtKB"/>
</dbReference>
<dbReference type="GO" id="GO:0015489">
    <property type="term" value="F:putrescine transmembrane transporter activity"/>
    <property type="evidence" value="ECO:0000250"/>
    <property type="project" value="UniProtKB"/>
</dbReference>
<dbReference type="GO" id="GO:0015214">
    <property type="term" value="F:pyrimidine nucleoside transmembrane transporter activity"/>
    <property type="evidence" value="ECO:0000266"/>
    <property type="project" value="RGD"/>
</dbReference>
<dbReference type="GO" id="GO:0015651">
    <property type="term" value="F:quaternary ammonium group transmembrane transporter activity"/>
    <property type="evidence" value="ECO:0000314"/>
    <property type="project" value="UniProtKB"/>
</dbReference>
<dbReference type="GO" id="GO:0015606">
    <property type="term" value="F:spermidine transmembrane transporter activity"/>
    <property type="evidence" value="ECO:0000250"/>
    <property type="project" value="UniProtKB"/>
</dbReference>
<dbReference type="GO" id="GO:0005496">
    <property type="term" value="F:steroid binding"/>
    <property type="evidence" value="ECO:0000314"/>
    <property type="project" value="RGD"/>
</dbReference>
<dbReference type="GO" id="GO:0015234">
    <property type="term" value="F:thiamine transmembrane transporter activity"/>
    <property type="evidence" value="ECO:0000250"/>
    <property type="project" value="UniProtKB"/>
</dbReference>
<dbReference type="GO" id="GO:0019534">
    <property type="term" value="F:toxin transmembrane transporter activity"/>
    <property type="evidence" value="ECO:0000314"/>
    <property type="project" value="ARUK-UCL"/>
</dbReference>
<dbReference type="GO" id="GO:0042910">
    <property type="term" value="F:xenobiotic transmembrane transporter activity"/>
    <property type="evidence" value="ECO:0000315"/>
    <property type="project" value="ARUK-UCL"/>
</dbReference>
<dbReference type="GO" id="GO:0015870">
    <property type="term" value="P:acetylcholine transport"/>
    <property type="evidence" value="ECO:0000314"/>
    <property type="project" value="UniProtKB"/>
</dbReference>
<dbReference type="GO" id="GO:0015837">
    <property type="term" value="P:amine transport"/>
    <property type="evidence" value="ECO:0000266"/>
    <property type="project" value="RGD"/>
</dbReference>
<dbReference type="GO" id="GO:0089718">
    <property type="term" value="P:amino acid import across plasma membrane"/>
    <property type="evidence" value="ECO:0000266"/>
    <property type="project" value="RGD"/>
</dbReference>
<dbReference type="GO" id="GO:1990748">
    <property type="term" value="P:cellular detoxification"/>
    <property type="evidence" value="ECO:0000314"/>
    <property type="project" value="ARUK-UCL"/>
</dbReference>
<dbReference type="GO" id="GO:0015871">
    <property type="term" value="P:choline transport"/>
    <property type="evidence" value="ECO:0000266"/>
    <property type="project" value="RGD"/>
</dbReference>
<dbReference type="GO" id="GO:0015872">
    <property type="term" value="P:dopamine transport"/>
    <property type="evidence" value="ECO:0000314"/>
    <property type="project" value="UniProtKB"/>
</dbReference>
<dbReference type="GO" id="GO:0090494">
    <property type="term" value="P:dopamine uptake"/>
    <property type="evidence" value="ECO:0000266"/>
    <property type="project" value="RGD"/>
</dbReference>
<dbReference type="GO" id="GO:0048241">
    <property type="term" value="P:epinephrine transport"/>
    <property type="evidence" value="ECO:0000314"/>
    <property type="project" value="UniProtKB"/>
</dbReference>
<dbReference type="GO" id="GO:0140115">
    <property type="term" value="P:export across plasma membrane"/>
    <property type="evidence" value="ECO:0000266"/>
    <property type="project" value="RGD"/>
</dbReference>
<dbReference type="GO" id="GO:0051608">
    <property type="term" value="P:histamine transport"/>
    <property type="evidence" value="ECO:0000314"/>
    <property type="project" value="UniProtKB"/>
</dbReference>
<dbReference type="GO" id="GO:0051615">
    <property type="term" value="P:histamine uptake"/>
    <property type="evidence" value="ECO:0000266"/>
    <property type="project" value="RGD"/>
</dbReference>
<dbReference type="GO" id="GO:1902475">
    <property type="term" value="P:L-alpha-amino acid transmembrane transport"/>
    <property type="evidence" value="ECO:0000266"/>
    <property type="project" value="RGD"/>
</dbReference>
<dbReference type="GO" id="GO:0097638">
    <property type="term" value="P:L-arginine import across plasma membrane"/>
    <property type="evidence" value="ECO:0000266"/>
    <property type="project" value="RGD"/>
</dbReference>
<dbReference type="GO" id="GO:0006812">
    <property type="term" value="P:monoatomic cation transport"/>
    <property type="evidence" value="ECO:0000266"/>
    <property type="project" value="RGD"/>
</dbReference>
<dbReference type="GO" id="GO:0006836">
    <property type="term" value="P:neurotransmitter transport"/>
    <property type="evidence" value="ECO:0000266"/>
    <property type="project" value="RGD"/>
</dbReference>
<dbReference type="GO" id="GO:0015874">
    <property type="term" value="P:norepinephrine transport"/>
    <property type="evidence" value="ECO:0000314"/>
    <property type="project" value="UniProtKB"/>
</dbReference>
<dbReference type="GO" id="GO:0051620">
    <property type="term" value="P:norepinephrine uptake"/>
    <property type="evidence" value="ECO:0000266"/>
    <property type="project" value="RGD"/>
</dbReference>
<dbReference type="GO" id="GO:0015695">
    <property type="term" value="P:organic cation transport"/>
    <property type="evidence" value="ECO:0000314"/>
    <property type="project" value="ARUK-UCL"/>
</dbReference>
<dbReference type="GO" id="GO:0015732">
    <property type="term" value="P:prostaglandin transport"/>
    <property type="evidence" value="ECO:0000250"/>
    <property type="project" value="UniProtKB"/>
</dbReference>
<dbReference type="GO" id="GO:0015847">
    <property type="term" value="P:putrescine transport"/>
    <property type="evidence" value="ECO:0000250"/>
    <property type="project" value="UniProtKB"/>
</dbReference>
<dbReference type="GO" id="GO:0015697">
    <property type="term" value="P:quaternary ammonium group transport"/>
    <property type="evidence" value="ECO:0000314"/>
    <property type="project" value="RGD"/>
</dbReference>
<dbReference type="GO" id="GO:0006837">
    <property type="term" value="P:serotonin transport"/>
    <property type="evidence" value="ECO:0000314"/>
    <property type="project" value="UniProtKB"/>
</dbReference>
<dbReference type="GO" id="GO:0051610">
    <property type="term" value="P:serotonin uptake"/>
    <property type="evidence" value="ECO:0000266"/>
    <property type="project" value="RGD"/>
</dbReference>
<dbReference type="GO" id="GO:0015848">
    <property type="term" value="P:spermidine transport"/>
    <property type="evidence" value="ECO:0000250"/>
    <property type="project" value="UniProtKB"/>
</dbReference>
<dbReference type="GO" id="GO:0071934">
    <property type="term" value="P:thiamine transmembrane transport"/>
    <property type="evidence" value="ECO:0000250"/>
    <property type="project" value="UniProtKB"/>
</dbReference>
<dbReference type="GO" id="GO:0042908">
    <property type="term" value="P:xenobiotic transport"/>
    <property type="evidence" value="ECO:0000314"/>
    <property type="project" value="ARUK-UCL"/>
</dbReference>
<dbReference type="GO" id="GO:1990962">
    <property type="term" value="P:xenobiotic transport across blood-brain barrier"/>
    <property type="evidence" value="ECO:0000303"/>
    <property type="project" value="ARUK-UCL"/>
</dbReference>
<dbReference type="CDD" id="cd17379">
    <property type="entry name" value="MFS_SLC22A1_2_3"/>
    <property type="match status" value="1"/>
</dbReference>
<dbReference type="FunFam" id="1.20.1250.20:FF:000148">
    <property type="entry name" value="Solute carrier family 22 member 2"/>
    <property type="match status" value="1"/>
</dbReference>
<dbReference type="Gene3D" id="1.20.1250.20">
    <property type="entry name" value="MFS general substrate transporter like domains"/>
    <property type="match status" value="1"/>
</dbReference>
<dbReference type="InterPro" id="IPR020846">
    <property type="entry name" value="MFS_dom"/>
</dbReference>
<dbReference type="InterPro" id="IPR005828">
    <property type="entry name" value="MFS_sugar_transport-like"/>
</dbReference>
<dbReference type="InterPro" id="IPR036259">
    <property type="entry name" value="MFS_trans_sf"/>
</dbReference>
<dbReference type="InterPro" id="IPR004749">
    <property type="entry name" value="Orgcat_transp/SVOP"/>
</dbReference>
<dbReference type="InterPro" id="IPR005829">
    <property type="entry name" value="Sugar_transporter_CS"/>
</dbReference>
<dbReference type="NCBIfam" id="TIGR00898">
    <property type="entry name" value="2A0119"/>
    <property type="match status" value="1"/>
</dbReference>
<dbReference type="PANTHER" id="PTHR24064">
    <property type="entry name" value="SOLUTE CARRIER FAMILY 22 MEMBER"/>
    <property type="match status" value="1"/>
</dbReference>
<dbReference type="Pfam" id="PF00083">
    <property type="entry name" value="Sugar_tr"/>
    <property type="match status" value="1"/>
</dbReference>
<dbReference type="SUPFAM" id="SSF103473">
    <property type="entry name" value="MFS general substrate transporter"/>
    <property type="match status" value="1"/>
</dbReference>
<dbReference type="PROSITE" id="PS50850">
    <property type="entry name" value="MFS"/>
    <property type="match status" value="1"/>
</dbReference>
<dbReference type="PROSITE" id="PS00216">
    <property type="entry name" value="SUGAR_TRANSPORT_1"/>
    <property type="match status" value="2"/>
</dbReference>
<reference key="1">
    <citation type="journal article" date="1996" name="Biochem. Biophys. Res. Commun.">
        <title>cDNA cloning and functional expression of a novel rat kidney organic cation transporter, OCT2.</title>
        <authorList>
            <person name="Okuda M."/>
            <person name="Saito H."/>
            <person name="Urakami Y."/>
            <person name="Takano M."/>
            <person name="Inui K."/>
        </authorList>
    </citation>
    <scope>NUCLEOTIDE SEQUENCE [MRNA]</scope>
    <scope>TISSUE SPECIFICITY</scope>
    <scope>MISCELLANEOUS</scope>
    <source>
        <strain>Sprague-Dawley</strain>
        <tissue>Kidney</tissue>
    </source>
</reference>
<reference key="2">
    <citation type="journal article" date="1997" name="DNA Cell Biol.">
        <title>Cloning and characterization of two human polyspecific organic cation transporters.</title>
        <authorList>
            <person name="Gorboulev V."/>
            <person name="Ulzheimer J.C."/>
            <person name="Akhoundova A."/>
            <person name="Ulzheimer-Teuber I."/>
            <person name="Karbach U."/>
            <person name="Quester S."/>
            <person name="Baumann C."/>
            <person name="Lang F."/>
            <person name="Busch A.E."/>
            <person name="Koepsell H."/>
        </authorList>
    </citation>
    <scope>NUCLEOTIDE SEQUENCE [MRNA]</scope>
    <scope>MISCELLANEOUS</scope>
    <source>
        <tissue>Kidney cortex</tissue>
    </source>
</reference>
<reference key="3">
    <citation type="journal article" date="1999" name="Mol. Pharmacol.">
        <title>Selective substrates for non-neuronal monoamine transporters.</title>
        <authorList>
            <person name="Gruendemann D."/>
            <person name="Liebich G."/>
            <person name="Kiefer N."/>
            <person name="Koster S."/>
            <person name="Schoemig E."/>
        </authorList>
    </citation>
    <scope>NUCLEOTIDE SEQUENCE [MRNA]</scope>
    <source>
        <tissue>Kidney</tissue>
    </source>
</reference>
<reference key="4">
    <citation type="journal article" date="1998" name="J. Biol. Chem.">
        <title>Transport of monoamine transmitters by the organic cation transporter type 2, OCT2.</title>
        <authorList>
            <person name="Grundemann D."/>
            <person name="Koster S."/>
            <person name="Kiefer N."/>
            <person name="Breidert T."/>
            <person name="Engelhardt M."/>
            <person name="Spitzenberger F."/>
            <person name="Obermuller N."/>
            <person name="Schomig E."/>
        </authorList>
    </citation>
    <scope>FUNCTION</scope>
    <scope>TRANSPORTER ACTIVITY</scope>
    <scope>BIOPHYSICAL PROPERTIES</scope>
</reference>
<reference key="5">
    <citation type="journal article" date="1998" name="J. Biol. Chem.">
        <title>Identity of the organic cation transporter OCT3 as the extraneuronal monoamine transporter (uptake2) and evidence for the expression of the transporter in the brain.</title>
        <authorList>
            <person name="Wu X."/>
            <person name="Kekuda R."/>
            <person name="Huang W."/>
            <person name="Fei Y.-J."/>
            <person name="Leibach F.H."/>
            <person name="Chen J."/>
            <person name="Conway S.J."/>
            <person name="Ganapathy V."/>
        </authorList>
    </citation>
    <scope>TISSUE SPECIFICITY</scope>
    <source>
        <tissue>Placenta</tissue>
    </source>
</reference>
<reference key="6">
    <citation type="journal article" date="2000" name="FEBS Lett.">
        <title>Hormonal regulation of organic cation transporter OCT2 expression in rat kidney.</title>
        <authorList>
            <person name="Urakami Y."/>
            <person name="Okuda M."/>
            <person name="Saito H."/>
            <person name="Inui K."/>
        </authorList>
    </citation>
    <scope>INDUCTION</scope>
    <scope>TISSUE SPECIFICITY</scope>
</reference>
<reference key="7">
    <citation type="journal article" date="2000" name="J. Biol. Chem.">
        <title>Mechanism of electrogenic cation transport by the cloned organic cation transporter 2 from rat.</title>
        <authorList>
            <person name="Budiman T."/>
            <person name="Bamberg E."/>
            <person name="Koepsell H."/>
            <person name="Nagel G."/>
        </authorList>
    </citation>
    <scope>FUNCTION</scope>
</reference>
<reference key="8">
    <citation type="journal article" date="2001" name="Pharm. Res.">
        <title>Distinct characteristics of organic cation transporters, OCT1 and OCT2, in the basolateral membrane of renal tubules.</title>
        <authorList>
            <person name="Urakami Y."/>
            <person name="Okuda M."/>
            <person name="Masuda S."/>
            <person name="Akazawa M."/>
            <person name="Saito H."/>
            <person name="Inui K."/>
        </authorList>
    </citation>
    <scope>FUNCTION</scope>
    <scope>TISSUE SPECIFICITY</scope>
    <scope>MISCELLANEOUS</scope>
</reference>
<reference key="9">
    <citation type="journal article" date="2000" name="Histochem. Cell Biol.">
        <title>Differential localization of organic cation transporters rOCT1 and rOCT2 in the basolateral membrane of rat kidney proximal tubules.</title>
        <authorList>
            <person name="Sugawara-Yokoo M."/>
            <person name="Urakami Y."/>
            <person name="Koyama H."/>
            <person name="Fujikura K."/>
            <person name="Masuda S."/>
            <person name="Saito H."/>
            <person name="Naruse T."/>
            <person name="Inui K."/>
            <person name="Takata K."/>
        </authorList>
    </citation>
    <scope>SUBCELLULAR LOCATION</scope>
    <scope>TISSUE SPECIFICITY</scope>
</reference>
<reference key="10">
    <citation type="journal article" date="2003" name="J. Pharmacol. Exp. Ther.">
        <title>Agmatine is efficiently transported by non-neuronal monoamine transporters extraneuronal monoamine transporter (EMT) and organic cation transporter 2 (OCT2).</title>
        <authorList>
            <person name="Grundemann D."/>
            <person name="Hahne C."/>
            <person name="Berkels R."/>
            <person name="Schomig E."/>
        </authorList>
    </citation>
    <scope>FUNCTION</scope>
    <scope>TRANSPORTER ACTIVITY</scope>
    <scope>BIOPHYSICOCHEMICAL PROPERTIES</scope>
    <scope>MISCELLANEOUS</scope>
</reference>
<reference key="11">
    <citation type="journal article" date="2005" name="Biochem. Pharmacol.">
        <title>Association between tubular toxicity of cisplatin and expression of organic cation transporter rOCT2 (Slc22a2) in the rat.</title>
        <authorList>
            <person name="Yonezawa A."/>
            <person name="Masuda S."/>
            <person name="Nishihara K."/>
            <person name="Yano I."/>
            <person name="Katsura T."/>
            <person name="Inui K."/>
        </authorList>
    </citation>
    <scope>MISCELLANEOUS</scope>
</reference>
<reference key="12">
    <citation type="journal article" date="2005" name="Drug Metab. Pharmacokinet.">
        <title>Metformin is a superior substrate for renal organic cation transporter OCT2 rather than hepatic OCT1.</title>
        <authorList>
            <person name="Kimura N."/>
            <person name="Masuda S."/>
            <person name="Tanihara Y."/>
            <person name="Ueo H."/>
            <person name="Okuda M."/>
            <person name="Katsura T."/>
            <person name="Inui K."/>
        </authorList>
    </citation>
    <scope>TISSUE SPECIFICITY</scope>
    <scope>MISCELLANEOUS</scope>
</reference>
<reference key="13">
    <citation type="journal article" date="2005" name="J. Pharmacol. Exp. Ther.">
        <title>A species difference in the transport activities of H2 receptor antagonists by rat and human renal organic anion and cation transporters.</title>
        <authorList>
            <person name="Tahara H."/>
            <person name="Kusuhara H."/>
            <person name="Endou H."/>
            <person name="Koepsell H."/>
            <person name="Imaoka T."/>
            <person name="Fuse E."/>
            <person name="Sugiyama Y."/>
        </authorList>
    </citation>
    <scope>FUNCTION</scope>
    <scope>MISCELLANEOUS</scope>
</reference>
<reference key="14">
    <citation type="journal article" date="2007" name="Am. J. Physiol.">
        <title>Identification of cysteines in rat organic cation transporters rOCT1 (C322, C451) and rOCT2 (C451) critical for transport activity and substrate affinity.</title>
        <authorList>
            <person name="Sturm A."/>
            <person name="Gorboulev V."/>
            <person name="Gorbunov D."/>
            <person name="Keller T."/>
            <person name="Volk C."/>
            <person name="Schmitt B.M."/>
            <person name="Schlachtbauer P."/>
            <person name="Ciarimboli G."/>
            <person name="Koepsell H."/>
        </authorList>
    </citation>
    <scope>MUTAGENESIS OF CYS-451</scope>
</reference>
<reference key="15">
    <citation type="journal article" date="2005" name="Am. J. Respir. Cell Mol. Biol.">
        <title>Polyspecific cation transporters mediate luminal release of acetylcholine from bronchial epithelium.</title>
        <authorList>
            <person name="Lips K.S."/>
            <person name="Volk C."/>
            <person name="Schmitt B.M."/>
            <person name="Pfeil U."/>
            <person name="Arndt P."/>
            <person name="Miska D."/>
            <person name="Ermert L."/>
            <person name="Kummer W."/>
            <person name="Koepsell H."/>
        </authorList>
    </citation>
    <scope>FUNCTION</scope>
    <scope>TRANSPORTER ACTIVITY</scope>
    <scope>SUBCELLULAR LOCATION</scope>
    <scope>TISSUE SPECIFICITY</scope>
</reference>
<reference key="16">
    <citation type="journal article" date="2006" name="Neuropharmacology">
        <title>Differential pharmacological in vitro properties of organic cation transporters and regional distribution in rat brain.</title>
        <authorList>
            <person name="Amphoux A."/>
            <person name="Vialou V."/>
            <person name="Drescher E."/>
            <person name="Bruess M."/>
            <person name="Mannoury La Cour C."/>
            <person name="Rochat C."/>
            <person name="Millan M.J."/>
            <person name="Giros B."/>
            <person name="Boenisch H."/>
            <person name="Gautron S."/>
        </authorList>
    </citation>
    <scope>FUNCTION</scope>
    <scope>TRANSPORTER ACTIVITY</scope>
    <scope>BIOPHYSICOCHEMICAL PROPERTIES</scope>
    <scope>TISSUE SPECIFICITY</scope>
    <scope>MISCELLANEOUS</scope>
</reference>
<reference key="17">
    <citation type="journal article" date="2007" name="Biochem. Pharmacol.">
        <title>Differential contribution of organic cation transporters, OCT2 and MATE1, in platinum agent-induced nephrotoxicity.</title>
        <authorList>
            <person name="Yokoo S."/>
            <person name="Yonezawa A."/>
            <person name="Masuda S."/>
            <person name="Fukatsu A."/>
            <person name="Katsura T."/>
            <person name="Inui K."/>
        </authorList>
    </citation>
    <scope>MISCELLANEOUS</scope>
</reference>
<reference key="18">
    <citation type="journal article" date="2008" name="Drug Metab. Dispos.">
        <title>Altered pharmacokinetics of cationic drugs caused by down-regulation of renal rat organic cation transporter 2 (slc22a2) and rat multidrug and toxin extrusion 1 (slc47a1) in ischemia/reperfusion-induced acute kidney injury.</title>
        <authorList>
            <person name="Matsuzaki T."/>
            <person name="Morisaki T."/>
            <person name="Sugimoto W."/>
            <person name="Yokoo K."/>
            <person name="Sato D."/>
            <person name="Nonoguchi H."/>
            <person name="Tomita K."/>
            <person name="Terada T."/>
            <person name="Inui K."/>
            <person name="Hamada A."/>
            <person name="Saito H."/>
        </authorList>
    </citation>
    <scope>INDUCTION BY ISCHEMIA</scope>
    <scope>MISCEALLENOUS</scope>
</reference>
<proteinExistence type="evidence at protein level"/>
<keyword id="KW-1003">Cell membrane</keyword>
<keyword id="KW-0325">Glycoprotein</keyword>
<keyword id="KW-0406">Ion transport</keyword>
<keyword id="KW-0472">Membrane</keyword>
<keyword id="KW-1185">Reference proteome</keyword>
<keyword id="KW-0812">Transmembrane</keyword>
<keyword id="KW-1133">Transmembrane helix</keyword>
<keyword id="KW-0813">Transport</keyword>
<feature type="chain" id="PRO_0000320962" description="Solute carrier family 22 member 2">
    <location>
        <begin position="1"/>
        <end position="555"/>
    </location>
</feature>
<feature type="topological domain" description="Cytoplasmic" evidence="3">
    <location>
        <begin position="1"/>
        <end position="21"/>
    </location>
</feature>
<feature type="transmembrane region" description="Helical" evidence="3">
    <location>
        <begin position="22"/>
        <end position="42"/>
    </location>
</feature>
<feature type="topological domain" description="Extracellular" evidence="3">
    <location>
        <begin position="43"/>
        <end position="150"/>
    </location>
</feature>
<feature type="transmembrane region" description="Helical" evidence="3">
    <location>
        <begin position="151"/>
        <end position="171"/>
    </location>
</feature>
<feature type="topological domain" description="Cytoplasmic" evidence="3">
    <location>
        <begin position="172"/>
        <end position="177"/>
    </location>
</feature>
<feature type="transmembrane region" description="Helical" evidence="3">
    <location>
        <begin position="178"/>
        <end position="198"/>
    </location>
</feature>
<feature type="topological domain" description="Extracellular" evidence="3">
    <location>
        <begin position="199"/>
        <end position="210"/>
    </location>
</feature>
<feature type="transmembrane region" description="Helical" evidence="3">
    <location>
        <begin position="211"/>
        <end position="231"/>
    </location>
</feature>
<feature type="topological domain" description="Cytoplasmic" evidence="3">
    <location>
        <begin position="232"/>
        <end position="238"/>
    </location>
</feature>
<feature type="transmembrane region" description="Helical" evidence="3">
    <location>
        <begin position="239"/>
        <end position="259"/>
    </location>
</feature>
<feature type="topological domain" description="Extracellular" evidence="3">
    <location>
        <begin position="260"/>
        <end position="263"/>
    </location>
</feature>
<feature type="transmembrane region" description="Helical" evidence="3">
    <location>
        <begin position="264"/>
        <end position="284"/>
    </location>
</feature>
<feature type="topological domain" description="Cytoplasmic" evidence="3">
    <location>
        <begin position="285"/>
        <end position="348"/>
    </location>
</feature>
<feature type="transmembrane region" description="Helical" evidence="3">
    <location>
        <begin position="349"/>
        <end position="369"/>
    </location>
</feature>
<feature type="topological domain" description="Extracellular" evidence="3">
    <location>
        <begin position="370"/>
        <end position="375"/>
    </location>
</feature>
<feature type="transmembrane region" description="Helical" evidence="3">
    <location>
        <begin position="376"/>
        <end position="396"/>
    </location>
</feature>
<feature type="topological domain" description="Cytoplasmic" evidence="3">
    <location>
        <begin position="397"/>
        <end position="404"/>
    </location>
</feature>
<feature type="transmembrane region" description="Helical" evidence="3">
    <location>
        <begin position="405"/>
        <end position="425"/>
    </location>
</feature>
<feature type="topological domain" description="Extracellular" evidence="3">
    <location>
        <begin position="426"/>
        <end position="432"/>
    </location>
</feature>
<feature type="transmembrane region" description="Helical" evidence="3">
    <location>
        <begin position="433"/>
        <end position="453"/>
    </location>
</feature>
<feature type="topological domain" description="Cytoplasmic" evidence="3">
    <location>
        <begin position="454"/>
        <end position="464"/>
    </location>
</feature>
<feature type="transmembrane region" description="Helical" evidence="3">
    <location>
        <begin position="465"/>
        <end position="485"/>
    </location>
</feature>
<feature type="topological domain" description="Extracellular" evidence="3">
    <location>
        <begin position="486"/>
        <end position="494"/>
    </location>
</feature>
<feature type="transmembrane region" description="Helical" evidence="3">
    <location>
        <begin position="495"/>
        <end position="515"/>
    </location>
</feature>
<feature type="topological domain" description="Cytoplasmic" evidence="3">
    <location>
        <begin position="516"/>
        <end position="555"/>
    </location>
</feature>
<feature type="short sequence motif" description="Proline-rich sequence" evidence="1">
    <location>
        <begin position="284"/>
        <end position="288"/>
    </location>
</feature>
<feature type="site" description="Involved in recognition of organic cations and participates in structural changes that occur during translocation of organic cations" evidence="14">
    <location>
        <position position="451"/>
    </location>
</feature>
<feature type="glycosylation site" description="N-linked (GlcNAc...) asparagine" evidence="3">
    <location>
        <position position="71"/>
    </location>
</feature>
<feature type="mutagenesis site" description="Transport activity strongly reduced." evidence="14">
    <original>C</original>
    <variation>M</variation>
    <location>
        <position position="451"/>
    </location>
</feature>
<feature type="sequence conflict" description="In Ref. 1; BAA11754." evidence="24" ref="1">
    <original>N</original>
    <variation>K</variation>
    <location>
        <position position="332"/>
    </location>
</feature>
<feature type="sequence conflict" description="In Ref. 1; BAA11754." evidence="24" ref="1">
    <original>F</original>
    <variation>I</variation>
    <location>
        <position position="335"/>
    </location>
</feature>
<comment type="function">
    <text evidence="1 5 7 8 9 13 19">Electrogenic voltage-dependent transporter that mediates the transport of a variety of organic cations such as endogenous bioactive amines, cationic drugs and xenobiotics (PubMed:10889205, PubMed:12538837, PubMed:15817714, PubMed:16581093, PubMed:9812985). Functions as a Na(+)-independent, bidirectional uniporter (By similarity). Cation cellular uptake or release is driven by the electrochemical potential, i.e. membrane potential and concentration gradient (PubMed:10889205). However, may also engage electroneutral cation exchange when saturating concentrations of cation substrates are reached (PubMed:10889205). Predominantly expressed at the basolateral membrane of hepatocytes and proximal tubules and involved in the uptake and disposition of cationic compounds by hepatic and renal clearance from the blood flow (By similarity). Implicated in monoamine neurotransmitters uptake such as histamine, dopamine, adrenaline/epinephrine, noradrenaline/norepinephrine, serotonin and tyramine, thereby supporting a physiological role in the central nervous system by regulating interstitial concentrations of neurotransmitters (PubMed:16581093, PubMed:9812985). Also capable of transporting dopaminergic neuromodulators cyclo(his-pro), salsolinol and N-methyl-salsolinol, thereby involved in the maintenance of dopaminergic cell integrity in the central nervous system (By similarity). Mediates the bidirectional transport of acetylcholine (ACh) at the apical membrane of ciliated cell in airway epithelium, thereby playing a role in luminal release of ACh from bronchial epithelium (PubMed:15817714). Also transports guanidine and endogenous monoamines such as vitamin B1/thiamine, creatinine and N-1-methylnicotinamide (NMN) (PubMed:11758759). Mediates the uptake and efflux of quaternary ammonium compound choline (PubMed:10889205). Mediates the bidirectional transport of polyamine agmatine and the uptake of polyamine putrescine (PubMed:12538837). Able to transport non-amine endogenous compounds such as prostaglandin E2 (PGE2) and prostaglandin F2-alpha (PGF2-alpha) (By similarity). Also involved in the uptake of xenobiotic 4-(4-(dimethylamino)styryl)-N-methylpyridinium (ASP) (By similarity). May contribute to regulate the transport of organic compounds in testis across the blood-testis-barrier (By similarity).</text>
</comment>
<comment type="catalytic activity">
    <reaction evidence="13 19">
        <text>(R)-noradrenaline(out) = (R)-noradrenaline(in)</text>
        <dbReference type="Rhea" id="RHEA:73871"/>
        <dbReference type="ChEBI" id="CHEBI:72587"/>
    </reaction>
</comment>
<comment type="catalytic activity">
    <reaction evidence="13 19">
        <text>(R)-adrenaline(out) = (R)-adrenaline(in)</text>
        <dbReference type="Rhea" id="RHEA:73875"/>
        <dbReference type="ChEBI" id="CHEBI:71406"/>
    </reaction>
</comment>
<comment type="catalytic activity">
    <reaction evidence="13 19">
        <text>serotonin(out) = serotonin(in)</text>
        <dbReference type="Rhea" id="RHEA:73867"/>
        <dbReference type="ChEBI" id="CHEBI:350546"/>
    </reaction>
</comment>
<comment type="catalytic activity">
    <reaction evidence="13 19">
        <text>dopamine(out) = dopamine(in)</text>
        <dbReference type="Rhea" id="RHEA:73863"/>
        <dbReference type="ChEBI" id="CHEBI:59905"/>
    </reaction>
</comment>
<comment type="catalytic activity">
    <reaction evidence="13">
        <text>histamine(out) = histamine(in)</text>
        <dbReference type="Rhea" id="RHEA:73879"/>
        <dbReference type="ChEBI" id="CHEBI:58432"/>
    </reaction>
</comment>
<comment type="catalytic activity">
    <reaction evidence="1">
        <text>thiamine(in) = thiamine(out)</text>
        <dbReference type="Rhea" id="RHEA:34919"/>
        <dbReference type="ChEBI" id="CHEBI:18385"/>
    </reaction>
</comment>
<comment type="catalytic activity">
    <reaction evidence="1">
        <text>creatinine(in) = creatinine(out)</text>
        <dbReference type="Rhea" id="RHEA:74539"/>
        <dbReference type="ChEBI" id="CHEBI:16737"/>
    </reaction>
</comment>
<comment type="catalytic activity">
    <reaction evidence="1">
        <text>1-methylnicotinamide(out) = 1-methylnicotinamide(in)</text>
        <dbReference type="Rhea" id="RHEA:73859"/>
        <dbReference type="ChEBI" id="CHEBI:16797"/>
    </reaction>
</comment>
<comment type="catalytic activity">
    <reaction evidence="7">
        <text>guanidine(out) = guanidine(in)</text>
        <dbReference type="Rhea" id="RHEA:73883"/>
        <dbReference type="ChEBI" id="CHEBI:30087"/>
    </reaction>
</comment>
<comment type="catalytic activity">
    <reaction evidence="1">
        <text>choline(out) = choline(in)</text>
        <dbReference type="Rhea" id="RHEA:32751"/>
        <dbReference type="ChEBI" id="CHEBI:15354"/>
    </reaction>
</comment>
<comment type="catalytic activity">
    <reaction evidence="8">
        <text>agmatine(out) = agmatine(in)</text>
        <dbReference type="Rhea" id="RHEA:72131"/>
        <dbReference type="ChEBI" id="CHEBI:58145"/>
    </reaction>
    <physiologicalReaction direction="left-to-right" evidence="1">
        <dbReference type="Rhea" id="RHEA:72132"/>
    </physiologicalReaction>
    <physiologicalReaction direction="right-to-left" evidence="1">
        <dbReference type="Rhea" id="RHEA:72133"/>
    </physiologicalReaction>
</comment>
<comment type="catalytic activity">
    <reaction evidence="1">
        <text>putrescine(out) = putrescine(in)</text>
        <dbReference type="Rhea" id="RHEA:72135"/>
        <dbReference type="ChEBI" id="CHEBI:326268"/>
    </reaction>
</comment>
<comment type="catalytic activity">
    <reaction evidence="2">
        <text>spermidine(in) = spermidine(out)</text>
        <dbReference type="Rhea" id="RHEA:35039"/>
        <dbReference type="ChEBI" id="CHEBI:57834"/>
    </reaction>
</comment>
<comment type="catalytic activity">
    <reaction evidence="1">
        <text>tyramine(in) = tyramine(out)</text>
        <dbReference type="Rhea" id="RHEA:74783"/>
        <dbReference type="ChEBI" id="CHEBI:327995"/>
    </reaction>
</comment>
<comment type="catalytic activity">
    <reaction evidence="1">
        <text>L-histidyl-L-proline diketopiperazine(in) = L-histidyl-L-proline diketopiperazine(out)</text>
        <dbReference type="Rhea" id="RHEA:74787"/>
        <dbReference type="ChEBI" id="CHEBI:90039"/>
    </reaction>
</comment>
<comment type="catalytic activity">
    <reaction evidence="1">
        <text>(R)-salsolinol(in) = (R)-salsolinol(out)</text>
        <dbReference type="Rhea" id="RHEA:74791"/>
        <dbReference type="ChEBI" id="CHEBI:194082"/>
    </reaction>
</comment>
<comment type="catalytic activity">
    <reaction evidence="1">
        <text>N-methyl-(R)-salsolinol(in) = N-methyl-(R)-salsolinol(out)</text>
        <dbReference type="Rhea" id="RHEA:74795"/>
        <dbReference type="ChEBI" id="CHEBI:194083"/>
    </reaction>
</comment>
<comment type="catalytic activity">
    <reaction evidence="9">
        <text>acetylcholine(in) = acetylcholine(out)</text>
        <dbReference type="Rhea" id="RHEA:74663"/>
        <dbReference type="ChEBI" id="CHEBI:15355"/>
    </reaction>
</comment>
<comment type="catalytic activity">
    <reaction evidence="1">
        <text>prostaglandin F2alpha(out) = prostaglandin F2alpha(in)</text>
        <dbReference type="Rhea" id="RHEA:50988"/>
        <dbReference type="ChEBI" id="CHEBI:57404"/>
    </reaction>
</comment>
<comment type="catalytic activity">
    <reaction evidence="1">
        <text>prostaglandin E2(out) = prostaglandin E2(in)</text>
        <dbReference type="Rhea" id="RHEA:50984"/>
        <dbReference type="ChEBI" id="CHEBI:606564"/>
    </reaction>
</comment>
<comment type="activity regulation">
    <text evidence="1">Tyrosine phosphorylation of the transporter leads to activation of the transport activity. Inhibited by cGMP, most likely through a cGMP-binding protein that interacts with OCT2.</text>
</comment>
<comment type="biophysicochemical properties">
    <kinetics>
        <KM evidence="13">0.76 mM for serotonin</KM>
        <KM evidence="19">3.6 mM for serotonin</KM>
        <KM evidence="13">0.89 mM for histamine</KM>
        <KM evidence="8">0.95 mM for agmatine (at pH 7.4)</KM>
        <KM evidence="13">1.37 mM for adrenaline</KM>
        <KM evidence="19">1.9 mM for adrenaline</KM>
        <KM evidence="13 19">2.1 mM for dopamine</KM>
        <KM evidence="13">2.1 mM for noradrenaline</KM>
        <KM evidence="19">4.4 mM for noradrenaline</KM>
        <Vmax evidence="8">9900.0 pmol/min/mg enzyme for agmatine uptake (at pH 7.4)</Vmax>
        <Vmax evidence="19">590.0 pmol/min/mg enzyme for adrenaline uptake</Vmax>
        <Vmax evidence="19">3900.0 pmol/min/mg enzyme for dopamine uptake</Vmax>
        <Vmax evidence="19">2500.0 pmol/min/mg enzyme for serotonin uptake</Vmax>
        <Vmax evidence="19">1000.0 pmol/min/mg enzyme for noradrenaline uptake</Vmax>
    </kinetics>
</comment>
<comment type="subcellular location">
    <subcellularLocation>
        <location evidence="6">Basolateral cell membrane</location>
        <topology evidence="24">Multi-pass membrane protein</topology>
    </subcellularLocation>
    <subcellularLocation>
        <location evidence="1">Basal cell membrane</location>
        <topology evidence="1">Multi-pass membrane protein</topology>
    </subcellularLocation>
    <subcellularLocation>
        <location evidence="9">Apical cell membrane</location>
        <topology evidence="24">Multi-pass membrane protein</topology>
    </subcellularLocation>
    <text evidence="6 9">Localized to the basolateral membranes of renal proximal tubular cells (PubMed:11083459). Localized to the luminal/apical membrane of ciliated epithelial cells in the airway (PubMed:15817714).</text>
</comment>
<comment type="tissue specificity">
    <text evidence="4 6 7 9 12 13 17">Expressed in the kidney, in the proximal tubules of cortex and of the outer medulla (PubMed:10812069, PubMed:11083459, PubMed:11758759, PubMed:16272756, PubMed:8702418, PubMed:9830022). In brain, highly expressed predominantly in regions located at the brain-cerebrospinal fluid border, in the leptomeninges, in the choroid plexus and in a layer boarding the third ventricle. In brain, also observed in the granular cell layer of the cerebellum and in the granular layer and pyramidal cells of the hippocampus in the CA1-CA3 regions (PubMed:16581093). Expressed in tracheal and bronchial ciliated epithelium in the respiratory tract (PubMed:15817714). Expression is greater in the kidney of male than of female (PubMed:16272756).</text>
</comment>
<comment type="induction">
    <text evidence="4 16">Down-regulated in ischemia/reperfusion (I/R) kidneys (PubMed:18180268). Up-regulated by testosterone and moderately down-regulated by estradiol (PubMed:10812069).</text>
</comment>
<comment type="domain">
    <text evidence="1">Contains one proline-rich sequence (Pro-Glu-Ser-Pro-Arg) that may be involved in tyrosine-protein kinase YES1 binding and is required for the activation of substrate transport.</text>
</comment>
<comment type="PTM">
    <text evidence="1">Tyrosine phosphorylated.</text>
</comment>
<comment type="miscellaneous">
    <text evidence="1 7 8 10 11 12 13 15 17 18 20 25">Mediates the renal secretion of many clinically used cationic drugs (Probable) (PubMed:16272756). Transports drugs such as diabetes treatment medicine metformin and neurotoxins 1-methyl-4-phenylpyridinium (MPP(+)), famotidine, ranitidine, amantadine, acriflavine, amiloride, memantine, cimetidine, cisplatin, oxaliplatin, platinum-based drugs cisplatin and oxaliplatin, 3'-azido-3'-deoxythymidine (AZT) and tetraethylammonium (TEA) (PubMed:11758759, PubMed:12538837, PubMed:16006492, PubMed:16242669, PubMed:16272756, PubMed:16581093, PubMed:8702418). Mediates the bidirectional transport of MPP(+) (PubMed:9260930). Metformin competitively inhibits OCT1-mediated thiamine uptake, leading to a decrease in hepatic steatosis (By similarity). Plays a predominant role in the anticancer activity of cisplatin and oxaliplatin and may contribute to antitumor specificity (PubMed:17582384). Involved in cisplatin-induced nephrotoxicity (PubMed:16242669, PubMed:17582384).</text>
</comment>
<comment type="similarity">
    <text evidence="24">Belongs to the major facilitator (TC 2.A.1) superfamily. Organic cation transporter (TC 2.A.1.19) family.</text>
</comment>
<comment type="caution">
    <text evidence="1">While most authors have deduced a localization at the basolateral membrane of proximal tubules, other studies demonstrated a localization to the luminal membrane in the distal tubule.</text>
</comment>
<comment type="sequence caution" evidence="24">
    <conflict type="frameshift">
        <sequence resource="EMBL-CDS" id="BAA11754"/>
    </conflict>
</comment>
<comment type="sequence caution" evidence="24">
    <conflict type="frameshift">
        <sequence resource="EMBL-CDS" id="CAA66979"/>
    </conflict>
</comment>
<protein>
    <recommendedName>
        <fullName evidence="21">Solute carrier family 22 member 2</fullName>
    </recommendedName>
    <alternativeName>
        <fullName evidence="23">Organic cation transporter 2</fullName>
        <shortName evidence="22">rOCT2</shortName>
    </alternativeName>
</protein>
<gene>
    <name evidence="26" type="primary">Slc22a2</name>
    <name type="synonym">Oct2</name>
</gene>
<accession>Q9R0W2</accession>
<accession>P70485</accession>
<accession>P97558</accession>
<organism>
    <name type="scientific">Rattus norvegicus</name>
    <name type="common">Rat</name>
    <dbReference type="NCBI Taxonomy" id="10116"/>
    <lineage>
        <taxon>Eukaryota</taxon>
        <taxon>Metazoa</taxon>
        <taxon>Chordata</taxon>
        <taxon>Craniata</taxon>
        <taxon>Vertebrata</taxon>
        <taxon>Euteleostomi</taxon>
        <taxon>Mammalia</taxon>
        <taxon>Eutheria</taxon>
        <taxon>Euarchontoglires</taxon>
        <taxon>Glires</taxon>
        <taxon>Rodentia</taxon>
        <taxon>Myomorpha</taxon>
        <taxon>Muroidea</taxon>
        <taxon>Muridae</taxon>
        <taxon>Murinae</taxon>
        <taxon>Rattus</taxon>
    </lineage>
</organism>